<dbReference type="EMBL" id="AF065404">
    <property type="protein sequence ID" value="AAD32444.1"/>
    <property type="molecule type" value="Genomic_DNA"/>
</dbReference>
<dbReference type="EMBL" id="AE011190">
    <property type="protein sequence ID" value="AAM26153.1"/>
    <property type="molecule type" value="Genomic_DNA"/>
</dbReference>
<dbReference type="EMBL" id="AE017336">
    <property type="protein sequence ID" value="AAT35500.1"/>
    <property type="molecule type" value="Genomic_DNA"/>
</dbReference>
<dbReference type="PIR" id="D59108">
    <property type="entry name" value="D59108"/>
</dbReference>
<dbReference type="RefSeq" id="NP_052836.1">
    <property type="nucleotide sequence ID" value="NC_001496.1"/>
</dbReference>
<dbReference type="RefSeq" id="WP_000708136.1">
    <property type="nucleotide sequence ID" value="NZ_VTZH01000012.1"/>
</dbReference>
<dbReference type="SMR" id="Q9X397"/>
<dbReference type="GeneID" id="45025540"/>
<dbReference type="KEGG" id="bar:GBAA_pXO1_0211"/>
<dbReference type="HOGENOM" id="CLU_046484_5_2_9"/>
<dbReference type="OMA" id="CITSFVF"/>
<dbReference type="Proteomes" id="UP000000594">
    <property type="component" value="Plasmid pXO1"/>
</dbReference>
<dbReference type="GO" id="GO:0004519">
    <property type="term" value="F:endonuclease activity"/>
    <property type="evidence" value="ECO:0007669"/>
    <property type="project" value="UniProtKB-KW"/>
</dbReference>
<dbReference type="GO" id="GO:0003676">
    <property type="term" value="F:nucleic acid binding"/>
    <property type="evidence" value="ECO:0007669"/>
    <property type="project" value="InterPro"/>
</dbReference>
<dbReference type="Gene3D" id="2.40.50.90">
    <property type="match status" value="1"/>
</dbReference>
<dbReference type="InterPro" id="IPR035437">
    <property type="entry name" value="SNase_OB-fold_sf"/>
</dbReference>
<dbReference type="InterPro" id="IPR016071">
    <property type="entry name" value="Staphylococal_nuclease_OB-fold"/>
</dbReference>
<dbReference type="InterPro" id="IPR002071">
    <property type="entry name" value="Thermonucl_AS"/>
</dbReference>
<dbReference type="PANTHER" id="PTHR12302">
    <property type="entry name" value="EBNA2 BINDING PROTEIN P100"/>
    <property type="match status" value="1"/>
</dbReference>
<dbReference type="PANTHER" id="PTHR12302:SF3">
    <property type="entry name" value="SERINE_THREONINE-PROTEIN KINASE 31"/>
    <property type="match status" value="1"/>
</dbReference>
<dbReference type="Pfam" id="PF00565">
    <property type="entry name" value="SNase"/>
    <property type="match status" value="1"/>
</dbReference>
<dbReference type="SMART" id="SM00318">
    <property type="entry name" value="SNc"/>
    <property type="match status" value="1"/>
</dbReference>
<dbReference type="SUPFAM" id="SSF50199">
    <property type="entry name" value="Staphylococcal nuclease"/>
    <property type="match status" value="1"/>
</dbReference>
<dbReference type="PROSITE" id="PS01123">
    <property type="entry name" value="TNASE_1"/>
    <property type="match status" value="1"/>
</dbReference>
<dbReference type="PROSITE" id="PS01284">
    <property type="entry name" value="TNASE_2"/>
    <property type="match status" value="1"/>
</dbReference>
<dbReference type="PROSITE" id="PS50830">
    <property type="entry name" value="TNASE_3"/>
    <property type="match status" value="1"/>
</dbReference>
<evidence type="ECO:0000250" key="1"/>
<evidence type="ECO:0000255" key="2"/>
<evidence type="ECO:0000255" key="3">
    <source>
        <dbReference type="PROSITE-ProRule" id="PRU00272"/>
    </source>
</evidence>
<sequence>MKIWIKAICITSFVIQMSACSSSAQTKNDSRPAQAVQNGIQQHVEGKDIVDIPEAYKRKLKGLETVKGKVLHIKDGDTIDVNVKGQKQTVRLLLLDTPESVSQKIPPQKMGKEASFFLKKQLDGKSVTLVYDQGPKEDKYGRKLAYVFCNGIHINELMAKSGYGIIAYIFKPNTTLLPEMLEAEKEAKEAKAGVWSIKGFVDEKNRHYNRNDAA</sequence>
<protein>
    <recommendedName>
        <fullName>Uncharacterized protein pXO1-141/BXA0211/GBAA_pXO1_0211</fullName>
    </recommendedName>
</protein>
<reference key="1">
    <citation type="journal article" date="1999" name="J. Bacteriol.">
        <title>Sequence and organization of pXO1, the large Bacillus anthracis plasmid harboring the anthrax toxin genes.</title>
        <authorList>
            <person name="Okinaka R.T."/>
            <person name="Cloud K."/>
            <person name="Hampton O."/>
            <person name="Hoffmaster A.R."/>
            <person name="Hill K.K."/>
            <person name="Keim P."/>
            <person name="Koehler T.M."/>
            <person name="Lamke G."/>
            <person name="Kumano S."/>
            <person name="Mahillon J."/>
            <person name="Manter D."/>
            <person name="Martinez Y."/>
            <person name="Ricke D."/>
            <person name="Svensson R."/>
            <person name="Jackson P.J."/>
        </authorList>
    </citation>
    <scope>NUCLEOTIDE SEQUENCE [LARGE SCALE GENOMIC DNA]</scope>
    <source>
        <strain>Sterne</strain>
    </source>
</reference>
<reference key="2">
    <citation type="journal article" date="2002" name="Science">
        <title>Comparative genome sequencing for discovery of novel polymorphisms in Bacillus anthracis.</title>
        <authorList>
            <person name="Read T.D."/>
            <person name="Salzberg S.L."/>
            <person name="Pop M."/>
            <person name="Shumway M.F."/>
            <person name="Umayam L."/>
            <person name="Jiang L."/>
            <person name="Holtzapple E."/>
            <person name="Busch J.D."/>
            <person name="Smith K.L."/>
            <person name="Schupp J.M."/>
            <person name="Solomon D."/>
            <person name="Keim P."/>
            <person name="Fraser C.M."/>
        </authorList>
    </citation>
    <scope>NUCLEOTIDE SEQUENCE [GENOMIC DNA]</scope>
    <source>
        <strain>Ames / isolate Florida / A2012</strain>
    </source>
</reference>
<reference key="3">
    <citation type="journal article" date="2009" name="J. Bacteriol.">
        <title>The complete genome sequence of Bacillus anthracis Ames 'Ancestor'.</title>
        <authorList>
            <person name="Ravel J."/>
            <person name="Jiang L."/>
            <person name="Stanley S.T."/>
            <person name="Wilson M.R."/>
            <person name="Decker R.S."/>
            <person name="Read T.D."/>
            <person name="Worsham P."/>
            <person name="Keim P.S."/>
            <person name="Salzberg S.L."/>
            <person name="Fraser-Liggett C.M."/>
            <person name="Rasko D.A."/>
        </authorList>
    </citation>
    <scope>NUCLEOTIDE SEQUENCE [LARGE SCALE GENOMIC DNA]</scope>
    <source>
        <strain>Ames ancestor</strain>
    </source>
</reference>
<name>Y6211_BACAN</name>
<geneLocation type="plasmid">
    <name>pXO1</name>
</geneLocation>
<proteinExistence type="inferred from homology"/>
<organism>
    <name type="scientific">Bacillus anthracis</name>
    <dbReference type="NCBI Taxonomy" id="1392"/>
    <lineage>
        <taxon>Bacteria</taxon>
        <taxon>Bacillati</taxon>
        <taxon>Bacillota</taxon>
        <taxon>Bacilli</taxon>
        <taxon>Bacillales</taxon>
        <taxon>Bacillaceae</taxon>
        <taxon>Bacillus</taxon>
        <taxon>Bacillus cereus group</taxon>
    </lineage>
</organism>
<keyword id="KW-0255">Endonuclease</keyword>
<keyword id="KW-0378">Hydrolase</keyword>
<keyword id="KW-0540">Nuclease</keyword>
<keyword id="KW-0614">Plasmid</keyword>
<keyword id="KW-1185">Reference proteome</keyword>
<keyword id="KW-0732">Signal</keyword>
<gene>
    <name type="ordered locus">pXO1-141</name>
    <name type="ordered locus">BXA0211</name>
    <name type="ordered locus">GBAA_pXO1_0211</name>
</gene>
<accession>Q9X397</accession>
<feature type="signal peptide" evidence="2">
    <location>
        <begin position="1"/>
        <end position="24"/>
    </location>
</feature>
<feature type="chain" id="PRO_0000034400" description="Uncharacterized protein pXO1-141/BXA0211/GBAA_pXO1_0211">
    <location>
        <begin position="25"/>
        <end position="214"/>
    </location>
</feature>
<feature type="domain" description="TNase-like" evidence="3">
    <location>
        <begin position="64"/>
        <end position="197"/>
    </location>
</feature>
<feature type="active site" evidence="1">
    <location>
        <position position="91"/>
    </location>
</feature>
<feature type="active site" evidence="1">
    <location>
        <position position="99"/>
    </location>
</feature>
<feature type="active site" evidence="1">
    <location>
        <position position="142"/>
    </location>
</feature>